<reference key="1">
    <citation type="journal article" date="2009" name="J. Bacteriol.">
        <title>The genome of Burkholderia cenocepacia J2315, an epidemic pathogen of cystic fibrosis patients.</title>
        <authorList>
            <person name="Holden M.T."/>
            <person name="Seth-Smith H.M."/>
            <person name="Crossman L.C."/>
            <person name="Sebaihia M."/>
            <person name="Bentley S.D."/>
            <person name="Cerdeno-Tarraga A.M."/>
            <person name="Thomson N.R."/>
            <person name="Bason N."/>
            <person name="Quail M.A."/>
            <person name="Sharp S."/>
            <person name="Cherevach I."/>
            <person name="Churcher C."/>
            <person name="Goodhead I."/>
            <person name="Hauser H."/>
            <person name="Holroyd N."/>
            <person name="Mungall K."/>
            <person name="Scott P."/>
            <person name="Walker D."/>
            <person name="White B."/>
            <person name="Rose H."/>
            <person name="Iversen P."/>
            <person name="Mil-Homens D."/>
            <person name="Rocha E.P."/>
            <person name="Fialho A.M."/>
            <person name="Baldwin A."/>
            <person name="Dowson C."/>
            <person name="Barrell B.G."/>
            <person name="Govan J.R."/>
            <person name="Vandamme P."/>
            <person name="Hart C.A."/>
            <person name="Mahenthiralingam E."/>
            <person name="Parkhill J."/>
        </authorList>
    </citation>
    <scope>NUCLEOTIDE SEQUENCE [LARGE SCALE GENOMIC DNA]</scope>
    <source>
        <strain>ATCC BAA-245 / DSM 16553 / LMG 16656 / NCTC 13227 / J2315 / CF5610</strain>
    </source>
</reference>
<comment type="function">
    <text evidence="1">Catalyzes the conversion of 4-hydroxy-tetrahydrodipicolinate (HTPA) to tetrahydrodipicolinate.</text>
</comment>
<comment type="catalytic activity">
    <reaction evidence="1">
        <text>(S)-2,3,4,5-tetrahydrodipicolinate + NAD(+) + H2O = (2S,4S)-4-hydroxy-2,3,4,5-tetrahydrodipicolinate + NADH + H(+)</text>
        <dbReference type="Rhea" id="RHEA:35323"/>
        <dbReference type="ChEBI" id="CHEBI:15377"/>
        <dbReference type="ChEBI" id="CHEBI:15378"/>
        <dbReference type="ChEBI" id="CHEBI:16845"/>
        <dbReference type="ChEBI" id="CHEBI:57540"/>
        <dbReference type="ChEBI" id="CHEBI:57945"/>
        <dbReference type="ChEBI" id="CHEBI:67139"/>
        <dbReference type="EC" id="1.17.1.8"/>
    </reaction>
</comment>
<comment type="catalytic activity">
    <reaction evidence="1">
        <text>(S)-2,3,4,5-tetrahydrodipicolinate + NADP(+) + H2O = (2S,4S)-4-hydroxy-2,3,4,5-tetrahydrodipicolinate + NADPH + H(+)</text>
        <dbReference type="Rhea" id="RHEA:35331"/>
        <dbReference type="ChEBI" id="CHEBI:15377"/>
        <dbReference type="ChEBI" id="CHEBI:15378"/>
        <dbReference type="ChEBI" id="CHEBI:16845"/>
        <dbReference type="ChEBI" id="CHEBI:57783"/>
        <dbReference type="ChEBI" id="CHEBI:58349"/>
        <dbReference type="ChEBI" id="CHEBI:67139"/>
        <dbReference type="EC" id="1.17.1.8"/>
    </reaction>
</comment>
<comment type="pathway">
    <text evidence="1">Amino-acid biosynthesis; L-lysine biosynthesis via DAP pathway; (S)-tetrahydrodipicolinate from L-aspartate: step 4/4.</text>
</comment>
<comment type="subcellular location">
    <subcellularLocation>
        <location evidence="1">Cytoplasm</location>
    </subcellularLocation>
</comment>
<comment type="similarity">
    <text evidence="1">Belongs to the DapB family.</text>
</comment>
<comment type="caution">
    <text evidence="2">Was originally thought to be a dihydrodipicolinate reductase (DHDPR), catalyzing the conversion of dihydrodipicolinate to tetrahydrodipicolinate. However, it was shown in E.coli that the substrate of the enzymatic reaction is not dihydrodipicolinate (DHDP) but in fact (2S,4S)-4-hydroxy-2,3,4,5-tetrahydrodipicolinic acid (HTPA), the product released by the DapA-catalyzed reaction.</text>
</comment>
<gene>
    <name evidence="1" type="primary">dapB</name>
    <name type="ordered locus">BceJ2315_33140</name>
    <name type="ORF">BCAL3376</name>
</gene>
<feature type="chain" id="PRO_1000093948" description="4-hydroxy-tetrahydrodipicolinate reductase">
    <location>
        <begin position="1"/>
        <end position="265"/>
    </location>
</feature>
<feature type="active site" description="Proton donor/acceptor" evidence="1">
    <location>
        <position position="153"/>
    </location>
</feature>
<feature type="active site" description="Proton donor" evidence="1">
    <location>
        <position position="157"/>
    </location>
</feature>
<feature type="binding site" evidence="1">
    <location>
        <begin position="7"/>
        <end position="12"/>
    </location>
    <ligand>
        <name>NAD(+)</name>
        <dbReference type="ChEBI" id="CHEBI:57540"/>
    </ligand>
</feature>
<feature type="binding site" evidence="1">
    <location>
        <position position="33"/>
    </location>
    <ligand>
        <name>NAD(+)</name>
        <dbReference type="ChEBI" id="CHEBI:57540"/>
    </ligand>
</feature>
<feature type="binding site" evidence="1">
    <location>
        <position position="34"/>
    </location>
    <ligand>
        <name>NADP(+)</name>
        <dbReference type="ChEBI" id="CHEBI:58349"/>
    </ligand>
</feature>
<feature type="binding site" evidence="1">
    <location>
        <begin position="96"/>
        <end position="98"/>
    </location>
    <ligand>
        <name>NAD(+)</name>
        <dbReference type="ChEBI" id="CHEBI:57540"/>
    </ligand>
</feature>
<feature type="binding site" evidence="1">
    <location>
        <begin position="120"/>
        <end position="123"/>
    </location>
    <ligand>
        <name>NAD(+)</name>
        <dbReference type="ChEBI" id="CHEBI:57540"/>
    </ligand>
</feature>
<feature type="binding site" evidence="1">
    <location>
        <position position="154"/>
    </location>
    <ligand>
        <name>(S)-2,3,4,5-tetrahydrodipicolinate</name>
        <dbReference type="ChEBI" id="CHEBI:16845"/>
    </ligand>
</feature>
<feature type="binding site" evidence="1">
    <location>
        <begin position="163"/>
        <end position="164"/>
    </location>
    <ligand>
        <name>(S)-2,3,4,5-tetrahydrodipicolinate</name>
        <dbReference type="ChEBI" id="CHEBI:16845"/>
    </ligand>
</feature>
<sequence length="265" mass="27771">MKIAIAGASGRMGRMLIEAVLNDADAQLVGALDRAGSPFLGQDAGAFLGKDTGIKLTDDLDAVFAQAEYLIDFTRPEGTMAHIAAALRHDVKLVIGTTGFTAEQKAELQAAAGKIGIVFAANMSVGVNVTLKLLEFAAKHFSHGYDIEIIEAHHRHKVDAPSGTALMMGEAVAGALGRSLDDCAVYGRHGVTGERDPSSIGFAAVRGGDIVGDHTVLFAGIGERIEITHKSSSRVSYAQGALRAVRFLSARGAGLFDMQDVLGLR</sequence>
<dbReference type="EC" id="1.17.1.8" evidence="1"/>
<dbReference type="EMBL" id="AM747720">
    <property type="protein sequence ID" value="CAR53699.1"/>
    <property type="molecule type" value="Genomic_DNA"/>
</dbReference>
<dbReference type="RefSeq" id="WP_006485630.1">
    <property type="nucleotide sequence ID" value="NC_011000.1"/>
</dbReference>
<dbReference type="SMR" id="B4EEW4"/>
<dbReference type="GeneID" id="56557086"/>
<dbReference type="KEGG" id="bcj:BCAL3376"/>
<dbReference type="eggNOG" id="COG0289">
    <property type="taxonomic scope" value="Bacteria"/>
</dbReference>
<dbReference type="HOGENOM" id="CLU_047479_2_1_4"/>
<dbReference type="BioCyc" id="BCEN216591:G1G1V-3754-MONOMER"/>
<dbReference type="UniPathway" id="UPA00034">
    <property type="reaction ID" value="UER00018"/>
</dbReference>
<dbReference type="Proteomes" id="UP000001035">
    <property type="component" value="Chromosome 1"/>
</dbReference>
<dbReference type="GO" id="GO:0005829">
    <property type="term" value="C:cytosol"/>
    <property type="evidence" value="ECO:0007669"/>
    <property type="project" value="TreeGrafter"/>
</dbReference>
<dbReference type="GO" id="GO:0008839">
    <property type="term" value="F:4-hydroxy-tetrahydrodipicolinate reductase"/>
    <property type="evidence" value="ECO:0007669"/>
    <property type="project" value="UniProtKB-EC"/>
</dbReference>
<dbReference type="GO" id="GO:0051287">
    <property type="term" value="F:NAD binding"/>
    <property type="evidence" value="ECO:0007669"/>
    <property type="project" value="UniProtKB-UniRule"/>
</dbReference>
<dbReference type="GO" id="GO:0050661">
    <property type="term" value="F:NADP binding"/>
    <property type="evidence" value="ECO:0007669"/>
    <property type="project" value="UniProtKB-UniRule"/>
</dbReference>
<dbReference type="GO" id="GO:0016726">
    <property type="term" value="F:oxidoreductase activity, acting on CH or CH2 groups, NAD or NADP as acceptor"/>
    <property type="evidence" value="ECO:0007669"/>
    <property type="project" value="UniProtKB-UniRule"/>
</dbReference>
<dbReference type="GO" id="GO:0019877">
    <property type="term" value="P:diaminopimelate biosynthetic process"/>
    <property type="evidence" value="ECO:0007669"/>
    <property type="project" value="UniProtKB-UniRule"/>
</dbReference>
<dbReference type="GO" id="GO:0009089">
    <property type="term" value="P:lysine biosynthetic process via diaminopimelate"/>
    <property type="evidence" value="ECO:0007669"/>
    <property type="project" value="UniProtKB-UniRule"/>
</dbReference>
<dbReference type="CDD" id="cd02274">
    <property type="entry name" value="DHDPR_N"/>
    <property type="match status" value="1"/>
</dbReference>
<dbReference type="FunFam" id="3.30.360.10:FF:000004">
    <property type="entry name" value="4-hydroxy-tetrahydrodipicolinate reductase"/>
    <property type="match status" value="1"/>
</dbReference>
<dbReference type="FunFam" id="3.40.50.720:FF:000048">
    <property type="entry name" value="4-hydroxy-tetrahydrodipicolinate reductase"/>
    <property type="match status" value="1"/>
</dbReference>
<dbReference type="Gene3D" id="3.30.360.10">
    <property type="entry name" value="Dihydrodipicolinate Reductase, domain 2"/>
    <property type="match status" value="1"/>
</dbReference>
<dbReference type="Gene3D" id="3.40.50.720">
    <property type="entry name" value="NAD(P)-binding Rossmann-like Domain"/>
    <property type="match status" value="1"/>
</dbReference>
<dbReference type="HAMAP" id="MF_00102">
    <property type="entry name" value="DapB"/>
    <property type="match status" value="1"/>
</dbReference>
<dbReference type="InterPro" id="IPR022663">
    <property type="entry name" value="DapB_C"/>
</dbReference>
<dbReference type="InterPro" id="IPR000846">
    <property type="entry name" value="DapB_N"/>
</dbReference>
<dbReference type="InterPro" id="IPR022664">
    <property type="entry name" value="DapB_N_CS"/>
</dbReference>
<dbReference type="InterPro" id="IPR023940">
    <property type="entry name" value="DHDPR_bac"/>
</dbReference>
<dbReference type="InterPro" id="IPR036291">
    <property type="entry name" value="NAD(P)-bd_dom_sf"/>
</dbReference>
<dbReference type="NCBIfam" id="TIGR00036">
    <property type="entry name" value="dapB"/>
    <property type="match status" value="1"/>
</dbReference>
<dbReference type="PANTHER" id="PTHR20836:SF0">
    <property type="entry name" value="4-HYDROXY-TETRAHYDRODIPICOLINATE REDUCTASE 1, CHLOROPLASTIC-RELATED"/>
    <property type="match status" value="1"/>
</dbReference>
<dbReference type="PANTHER" id="PTHR20836">
    <property type="entry name" value="DIHYDRODIPICOLINATE REDUCTASE"/>
    <property type="match status" value="1"/>
</dbReference>
<dbReference type="Pfam" id="PF05173">
    <property type="entry name" value="DapB_C"/>
    <property type="match status" value="1"/>
</dbReference>
<dbReference type="Pfam" id="PF01113">
    <property type="entry name" value="DapB_N"/>
    <property type="match status" value="1"/>
</dbReference>
<dbReference type="PIRSF" id="PIRSF000161">
    <property type="entry name" value="DHPR"/>
    <property type="match status" value="1"/>
</dbReference>
<dbReference type="SUPFAM" id="SSF55347">
    <property type="entry name" value="Glyceraldehyde-3-phosphate dehydrogenase-like, C-terminal domain"/>
    <property type="match status" value="1"/>
</dbReference>
<dbReference type="SUPFAM" id="SSF51735">
    <property type="entry name" value="NAD(P)-binding Rossmann-fold domains"/>
    <property type="match status" value="1"/>
</dbReference>
<dbReference type="PROSITE" id="PS01298">
    <property type="entry name" value="DAPB"/>
    <property type="match status" value="1"/>
</dbReference>
<organism>
    <name type="scientific">Burkholderia cenocepacia (strain ATCC BAA-245 / DSM 16553 / LMG 16656 / NCTC 13227 / J2315 / CF5610)</name>
    <name type="common">Burkholderia cepacia (strain J2315)</name>
    <dbReference type="NCBI Taxonomy" id="216591"/>
    <lineage>
        <taxon>Bacteria</taxon>
        <taxon>Pseudomonadati</taxon>
        <taxon>Pseudomonadota</taxon>
        <taxon>Betaproteobacteria</taxon>
        <taxon>Burkholderiales</taxon>
        <taxon>Burkholderiaceae</taxon>
        <taxon>Burkholderia</taxon>
        <taxon>Burkholderia cepacia complex</taxon>
    </lineage>
</organism>
<evidence type="ECO:0000255" key="1">
    <source>
        <dbReference type="HAMAP-Rule" id="MF_00102"/>
    </source>
</evidence>
<evidence type="ECO:0000305" key="2"/>
<protein>
    <recommendedName>
        <fullName evidence="1">4-hydroxy-tetrahydrodipicolinate reductase</fullName>
        <shortName evidence="1">HTPA reductase</shortName>
        <ecNumber evidence="1">1.17.1.8</ecNumber>
    </recommendedName>
</protein>
<keyword id="KW-0028">Amino-acid biosynthesis</keyword>
<keyword id="KW-0963">Cytoplasm</keyword>
<keyword id="KW-0220">Diaminopimelate biosynthesis</keyword>
<keyword id="KW-0457">Lysine biosynthesis</keyword>
<keyword id="KW-0520">NAD</keyword>
<keyword id="KW-0521">NADP</keyword>
<keyword id="KW-0560">Oxidoreductase</keyword>
<accession>B4EEW4</accession>
<name>DAPB_BURCJ</name>
<proteinExistence type="inferred from homology"/>